<sequence length="491" mass="53540">MNTQQLAKLRSIVPEMRRVRHIHFVGIGGAGMGGIAEVLANEGYQISGSDLAPNPVTQQLMNLGATIYFNHRPENVRDASVVVVSSAISADNPEIVAAHEARIPVIRRAEMLAELMRFRHGIAIAGTHGKTTTTAMVSSIYAEAGLDPTFVNGGLVKAAGVHARLGHGRYLIAEADESDASFLHLQPMVAIVTNIEADHMDTYQGDFENLKQTFINFLHNLPFYGRAVMCVDDPVIRELLPRVGRQTTTYGFSEDADVRVEDYQQIGPQGHFTLLRQDKEPMRVTLNAPGRHNALNAAAAVAVATEEGIDDEAILRALESFQGTGRRFDFLGEFPLEPVNGKSGTAMLVDDYGHHPTEVDATIKAARAGWPDKNLVMLFQPHRFTRTRDLYDDFANVLTQVDTLLMLEVYPAGEAPIPGADSRSLCRTIRGRGKIDPILVPDPAQVAEMLAPVLTGNDLILVQGAGNIGKIARSLAEIKLKPQTPEEAQHD</sequence>
<keyword id="KW-0067">ATP-binding</keyword>
<keyword id="KW-0131">Cell cycle</keyword>
<keyword id="KW-0132">Cell division</keyword>
<keyword id="KW-0133">Cell shape</keyword>
<keyword id="KW-0961">Cell wall biogenesis/degradation</keyword>
<keyword id="KW-0963">Cytoplasm</keyword>
<keyword id="KW-0436">Ligase</keyword>
<keyword id="KW-0547">Nucleotide-binding</keyword>
<keyword id="KW-0573">Peptidoglycan synthesis</keyword>
<dbReference type="EC" id="6.3.2.8" evidence="1"/>
<dbReference type="EMBL" id="CU928164">
    <property type="protein sequence ID" value="CAR16235.1"/>
    <property type="molecule type" value="Genomic_DNA"/>
</dbReference>
<dbReference type="RefSeq" id="WP_001096047.1">
    <property type="nucleotide sequence ID" value="NC_011750.1"/>
</dbReference>
<dbReference type="RefSeq" id="YP_002406143.1">
    <property type="nucleotide sequence ID" value="NC_011750.1"/>
</dbReference>
<dbReference type="SMR" id="B7NHJ7"/>
<dbReference type="STRING" id="585057.ECIAI39_0094"/>
<dbReference type="KEGG" id="ect:ECIAI39_0094"/>
<dbReference type="PATRIC" id="fig|585057.6.peg.103"/>
<dbReference type="HOGENOM" id="CLU_028104_2_2_6"/>
<dbReference type="UniPathway" id="UPA00219"/>
<dbReference type="Proteomes" id="UP000000749">
    <property type="component" value="Chromosome"/>
</dbReference>
<dbReference type="GO" id="GO:0005737">
    <property type="term" value="C:cytoplasm"/>
    <property type="evidence" value="ECO:0007669"/>
    <property type="project" value="UniProtKB-SubCell"/>
</dbReference>
<dbReference type="GO" id="GO:0005524">
    <property type="term" value="F:ATP binding"/>
    <property type="evidence" value="ECO:0007669"/>
    <property type="project" value="UniProtKB-UniRule"/>
</dbReference>
<dbReference type="GO" id="GO:0008763">
    <property type="term" value="F:UDP-N-acetylmuramate-L-alanine ligase activity"/>
    <property type="evidence" value="ECO:0007669"/>
    <property type="project" value="UniProtKB-UniRule"/>
</dbReference>
<dbReference type="GO" id="GO:0051301">
    <property type="term" value="P:cell division"/>
    <property type="evidence" value="ECO:0007669"/>
    <property type="project" value="UniProtKB-KW"/>
</dbReference>
<dbReference type="GO" id="GO:0071555">
    <property type="term" value="P:cell wall organization"/>
    <property type="evidence" value="ECO:0007669"/>
    <property type="project" value="UniProtKB-KW"/>
</dbReference>
<dbReference type="GO" id="GO:0009252">
    <property type="term" value="P:peptidoglycan biosynthetic process"/>
    <property type="evidence" value="ECO:0007669"/>
    <property type="project" value="UniProtKB-UniRule"/>
</dbReference>
<dbReference type="GO" id="GO:0008360">
    <property type="term" value="P:regulation of cell shape"/>
    <property type="evidence" value="ECO:0007669"/>
    <property type="project" value="UniProtKB-KW"/>
</dbReference>
<dbReference type="FunFam" id="3.40.1190.10:FF:000001">
    <property type="entry name" value="UDP-N-acetylmuramate--L-alanine ligase"/>
    <property type="match status" value="1"/>
</dbReference>
<dbReference type="FunFam" id="3.40.50.720:FF:000046">
    <property type="entry name" value="UDP-N-acetylmuramate--L-alanine ligase"/>
    <property type="match status" value="1"/>
</dbReference>
<dbReference type="FunFam" id="3.90.190.20:FF:000001">
    <property type="entry name" value="UDP-N-acetylmuramate--L-alanine ligase"/>
    <property type="match status" value="1"/>
</dbReference>
<dbReference type="Gene3D" id="3.90.190.20">
    <property type="entry name" value="Mur ligase, C-terminal domain"/>
    <property type="match status" value="1"/>
</dbReference>
<dbReference type="Gene3D" id="3.40.1190.10">
    <property type="entry name" value="Mur-like, catalytic domain"/>
    <property type="match status" value="1"/>
</dbReference>
<dbReference type="Gene3D" id="3.40.50.720">
    <property type="entry name" value="NAD(P)-binding Rossmann-like Domain"/>
    <property type="match status" value="1"/>
</dbReference>
<dbReference type="HAMAP" id="MF_00046">
    <property type="entry name" value="MurC"/>
    <property type="match status" value="1"/>
</dbReference>
<dbReference type="InterPro" id="IPR036565">
    <property type="entry name" value="Mur-like_cat_sf"/>
</dbReference>
<dbReference type="InterPro" id="IPR004101">
    <property type="entry name" value="Mur_ligase_C"/>
</dbReference>
<dbReference type="InterPro" id="IPR036615">
    <property type="entry name" value="Mur_ligase_C_dom_sf"/>
</dbReference>
<dbReference type="InterPro" id="IPR013221">
    <property type="entry name" value="Mur_ligase_cen"/>
</dbReference>
<dbReference type="InterPro" id="IPR000713">
    <property type="entry name" value="Mur_ligase_N"/>
</dbReference>
<dbReference type="InterPro" id="IPR050061">
    <property type="entry name" value="MurCDEF_pg_biosynth"/>
</dbReference>
<dbReference type="InterPro" id="IPR005758">
    <property type="entry name" value="UDP-N-AcMur_Ala_ligase_MurC"/>
</dbReference>
<dbReference type="NCBIfam" id="TIGR01082">
    <property type="entry name" value="murC"/>
    <property type="match status" value="1"/>
</dbReference>
<dbReference type="PANTHER" id="PTHR43445:SF3">
    <property type="entry name" value="UDP-N-ACETYLMURAMATE--L-ALANINE LIGASE"/>
    <property type="match status" value="1"/>
</dbReference>
<dbReference type="PANTHER" id="PTHR43445">
    <property type="entry name" value="UDP-N-ACETYLMURAMATE--L-ALANINE LIGASE-RELATED"/>
    <property type="match status" value="1"/>
</dbReference>
<dbReference type="Pfam" id="PF01225">
    <property type="entry name" value="Mur_ligase"/>
    <property type="match status" value="1"/>
</dbReference>
<dbReference type="Pfam" id="PF02875">
    <property type="entry name" value="Mur_ligase_C"/>
    <property type="match status" value="1"/>
</dbReference>
<dbReference type="Pfam" id="PF08245">
    <property type="entry name" value="Mur_ligase_M"/>
    <property type="match status" value="1"/>
</dbReference>
<dbReference type="SUPFAM" id="SSF51984">
    <property type="entry name" value="MurCD N-terminal domain"/>
    <property type="match status" value="1"/>
</dbReference>
<dbReference type="SUPFAM" id="SSF53623">
    <property type="entry name" value="MurD-like peptide ligases, catalytic domain"/>
    <property type="match status" value="1"/>
</dbReference>
<dbReference type="SUPFAM" id="SSF53244">
    <property type="entry name" value="MurD-like peptide ligases, peptide-binding domain"/>
    <property type="match status" value="1"/>
</dbReference>
<organism>
    <name type="scientific">Escherichia coli O7:K1 (strain IAI39 / ExPEC)</name>
    <dbReference type="NCBI Taxonomy" id="585057"/>
    <lineage>
        <taxon>Bacteria</taxon>
        <taxon>Pseudomonadati</taxon>
        <taxon>Pseudomonadota</taxon>
        <taxon>Gammaproteobacteria</taxon>
        <taxon>Enterobacterales</taxon>
        <taxon>Enterobacteriaceae</taxon>
        <taxon>Escherichia</taxon>
    </lineage>
</organism>
<evidence type="ECO:0000255" key="1">
    <source>
        <dbReference type="HAMAP-Rule" id="MF_00046"/>
    </source>
</evidence>
<proteinExistence type="inferred from homology"/>
<comment type="function">
    <text evidence="1">Cell wall formation.</text>
</comment>
<comment type="catalytic activity">
    <reaction evidence="1">
        <text>UDP-N-acetyl-alpha-D-muramate + L-alanine + ATP = UDP-N-acetyl-alpha-D-muramoyl-L-alanine + ADP + phosphate + H(+)</text>
        <dbReference type="Rhea" id="RHEA:23372"/>
        <dbReference type="ChEBI" id="CHEBI:15378"/>
        <dbReference type="ChEBI" id="CHEBI:30616"/>
        <dbReference type="ChEBI" id="CHEBI:43474"/>
        <dbReference type="ChEBI" id="CHEBI:57972"/>
        <dbReference type="ChEBI" id="CHEBI:70757"/>
        <dbReference type="ChEBI" id="CHEBI:83898"/>
        <dbReference type="ChEBI" id="CHEBI:456216"/>
        <dbReference type="EC" id="6.3.2.8"/>
    </reaction>
</comment>
<comment type="pathway">
    <text evidence="1">Cell wall biogenesis; peptidoglycan biosynthesis.</text>
</comment>
<comment type="subcellular location">
    <subcellularLocation>
        <location evidence="1">Cytoplasm</location>
    </subcellularLocation>
</comment>
<comment type="similarity">
    <text evidence="1">Belongs to the MurCDEF family.</text>
</comment>
<feature type="chain" id="PRO_1000116622" description="UDP-N-acetylmuramate--L-alanine ligase">
    <location>
        <begin position="1"/>
        <end position="491"/>
    </location>
</feature>
<feature type="binding site" evidence="1">
    <location>
        <begin position="126"/>
        <end position="132"/>
    </location>
    <ligand>
        <name>ATP</name>
        <dbReference type="ChEBI" id="CHEBI:30616"/>
    </ligand>
</feature>
<protein>
    <recommendedName>
        <fullName evidence="1">UDP-N-acetylmuramate--L-alanine ligase</fullName>
        <ecNumber evidence="1">6.3.2.8</ecNumber>
    </recommendedName>
    <alternativeName>
        <fullName evidence="1">UDP-N-acetylmuramoyl-L-alanine synthetase</fullName>
    </alternativeName>
</protein>
<name>MURC_ECO7I</name>
<reference key="1">
    <citation type="journal article" date="2009" name="PLoS Genet.">
        <title>Organised genome dynamics in the Escherichia coli species results in highly diverse adaptive paths.</title>
        <authorList>
            <person name="Touchon M."/>
            <person name="Hoede C."/>
            <person name="Tenaillon O."/>
            <person name="Barbe V."/>
            <person name="Baeriswyl S."/>
            <person name="Bidet P."/>
            <person name="Bingen E."/>
            <person name="Bonacorsi S."/>
            <person name="Bouchier C."/>
            <person name="Bouvet O."/>
            <person name="Calteau A."/>
            <person name="Chiapello H."/>
            <person name="Clermont O."/>
            <person name="Cruveiller S."/>
            <person name="Danchin A."/>
            <person name="Diard M."/>
            <person name="Dossat C."/>
            <person name="Karoui M.E."/>
            <person name="Frapy E."/>
            <person name="Garry L."/>
            <person name="Ghigo J.M."/>
            <person name="Gilles A.M."/>
            <person name="Johnson J."/>
            <person name="Le Bouguenec C."/>
            <person name="Lescat M."/>
            <person name="Mangenot S."/>
            <person name="Martinez-Jehanne V."/>
            <person name="Matic I."/>
            <person name="Nassif X."/>
            <person name="Oztas S."/>
            <person name="Petit M.A."/>
            <person name="Pichon C."/>
            <person name="Rouy Z."/>
            <person name="Ruf C.S."/>
            <person name="Schneider D."/>
            <person name="Tourret J."/>
            <person name="Vacherie B."/>
            <person name="Vallenet D."/>
            <person name="Medigue C."/>
            <person name="Rocha E.P.C."/>
            <person name="Denamur E."/>
        </authorList>
    </citation>
    <scope>NUCLEOTIDE SEQUENCE [LARGE SCALE GENOMIC DNA]</scope>
    <source>
        <strain>IAI39 / ExPEC</strain>
    </source>
</reference>
<gene>
    <name evidence="1" type="primary">murC</name>
    <name type="ordered locus">ECIAI39_0094</name>
</gene>
<accession>B7NHJ7</accession>